<protein>
    <recommendedName>
        <fullName>Uncharacterized protein MJ1129</fullName>
    </recommendedName>
</protein>
<reference key="1">
    <citation type="journal article" date="1996" name="Science">
        <title>Complete genome sequence of the methanogenic archaeon, Methanococcus jannaschii.</title>
        <authorList>
            <person name="Bult C.J."/>
            <person name="White O."/>
            <person name="Olsen G.J."/>
            <person name="Zhou L."/>
            <person name="Fleischmann R.D."/>
            <person name="Sutton G.G."/>
            <person name="Blake J.A."/>
            <person name="FitzGerald L.M."/>
            <person name="Clayton R.A."/>
            <person name="Gocayne J.D."/>
            <person name="Kerlavage A.R."/>
            <person name="Dougherty B.A."/>
            <person name="Tomb J.-F."/>
            <person name="Adams M.D."/>
            <person name="Reich C.I."/>
            <person name="Overbeek R."/>
            <person name="Kirkness E.F."/>
            <person name="Weinstock K.G."/>
            <person name="Merrick J.M."/>
            <person name="Glodek A."/>
            <person name="Scott J.L."/>
            <person name="Geoghagen N.S.M."/>
            <person name="Weidman J.F."/>
            <person name="Fuhrmann J.L."/>
            <person name="Nguyen D."/>
            <person name="Utterback T.R."/>
            <person name="Kelley J.M."/>
            <person name="Peterson J.D."/>
            <person name="Sadow P.W."/>
            <person name="Hanna M.C."/>
            <person name="Cotton M.D."/>
            <person name="Roberts K.M."/>
            <person name="Hurst M.A."/>
            <person name="Kaine B.P."/>
            <person name="Borodovsky M."/>
            <person name="Klenk H.-P."/>
            <person name="Fraser C.M."/>
            <person name="Smith H.O."/>
            <person name="Woese C.R."/>
            <person name="Venter J.C."/>
        </authorList>
    </citation>
    <scope>NUCLEOTIDE SEQUENCE [LARGE SCALE GENOMIC DNA]</scope>
    <source>
        <strain>ATCC 43067 / DSM 2661 / JAL-1 / JCM 10045 / NBRC 100440</strain>
    </source>
</reference>
<gene>
    <name type="ordered locus">MJ1129</name>
</gene>
<name>Y1129_METJA</name>
<proteinExistence type="predicted"/>
<dbReference type="EMBL" id="L77117">
    <property type="protein sequence ID" value="AAB99131.1"/>
    <property type="molecule type" value="Genomic_DNA"/>
</dbReference>
<dbReference type="PIR" id="H64440">
    <property type="entry name" value="H64440"/>
</dbReference>
<dbReference type="RefSeq" id="WP_010870640.1">
    <property type="nucleotide sequence ID" value="NC_000909.1"/>
</dbReference>
<dbReference type="SMR" id="Q58529"/>
<dbReference type="FunCoup" id="Q58529">
    <property type="interactions" value="1"/>
</dbReference>
<dbReference type="STRING" id="243232.MJ_1129"/>
<dbReference type="PaxDb" id="243232-MJ_1129"/>
<dbReference type="EnsemblBacteria" id="AAB99131">
    <property type="protein sequence ID" value="AAB99131"/>
    <property type="gene ID" value="MJ_1129"/>
</dbReference>
<dbReference type="GeneID" id="1452025"/>
<dbReference type="KEGG" id="mja:MJ_1129"/>
<dbReference type="eggNOG" id="arCOG01845">
    <property type="taxonomic scope" value="Archaea"/>
</dbReference>
<dbReference type="HOGENOM" id="CLU_091588_3_0_2"/>
<dbReference type="InParanoid" id="Q58529"/>
<dbReference type="OrthoDB" id="371709at2157"/>
<dbReference type="PhylomeDB" id="Q58529"/>
<dbReference type="Proteomes" id="UP000000805">
    <property type="component" value="Chromosome"/>
</dbReference>
<dbReference type="Gene3D" id="3.30.300.130">
    <property type="entry name" value="Fe-S cluster assembly (FSCA)"/>
    <property type="match status" value="1"/>
</dbReference>
<dbReference type="InterPro" id="IPR052339">
    <property type="entry name" value="Fe-S_Maturation_MIP18"/>
</dbReference>
<dbReference type="InterPro" id="IPR034904">
    <property type="entry name" value="FSCA_dom_sf"/>
</dbReference>
<dbReference type="InterPro" id="IPR002744">
    <property type="entry name" value="MIP18-like"/>
</dbReference>
<dbReference type="PANTHER" id="PTHR42831">
    <property type="entry name" value="FE-S PROTEIN MATURATION AUXILIARY FACTOR YITW"/>
    <property type="match status" value="1"/>
</dbReference>
<dbReference type="PANTHER" id="PTHR42831:SF1">
    <property type="entry name" value="FE-S PROTEIN MATURATION AUXILIARY FACTOR YITW"/>
    <property type="match status" value="1"/>
</dbReference>
<dbReference type="Pfam" id="PF01883">
    <property type="entry name" value="FeS_assembly_P"/>
    <property type="match status" value="1"/>
</dbReference>
<dbReference type="SUPFAM" id="SSF117916">
    <property type="entry name" value="Fe-S cluster assembly (FSCA) domain-like"/>
    <property type="match status" value="1"/>
</dbReference>
<sequence>MVTKEDVLNALKTVADPHMGISIVDMGLIRDVEVDDEGNVKFKLIPTNPYCMSVMAMAFQAKEAVKSLEGVKKVEVTVEGHVMEKDINEMLKEKE</sequence>
<accession>Q58529</accession>
<keyword id="KW-1185">Reference proteome</keyword>
<organism>
    <name type="scientific">Methanocaldococcus jannaschii (strain ATCC 43067 / DSM 2661 / JAL-1 / JCM 10045 / NBRC 100440)</name>
    <name type="common">Methanococcus jannaschii</name>
    <dbReference type="NCBI Taxonomy" id="243232"/>
    <lineage>
        <taxon>Archaea</taxon>
        <taxon>Methanobacteriati</taxon>
        <taxon>Methanobacteriota</taxon>
        <taxon>Methanomada group</taxon>
        <taxon>Methanococci</taxon>
        <taxon>Methanococcales</taxon>
        <taxon>Methanocaldococcaceae</taxon>
        <taxon>Methanocaldococcus</taxon>
    </lineage>
</organism>
<feature type="chain" id="PRO_0000107181" description="Uncharacterized protein MJ1129">
    <location>
        <begin position="1"/>
        <end position="95"/>
    </location>
</feature>